<proteinExistence type="inferred from homology"/>
<organism>
    <name type="scientific">Leptospira interrogans serogroup Icterohaemorrhagiae serovar copenhageni (strain Fiocruz L1-130)</name>
    <dbReference type="NCBI Taxonomy" id="267671"/>
    <lineage>
        <taxon>Bacteria</taxon>
        <taxon>Pseudomonadati</taxon>
        <taxon>Spirochaetota</taxon>
        <taxon>Spirochaetia</taxon>
        <taxon>Leptospirales</taxon>
        <taxon>Leptospiraceae</taxon>
        <taxon>Leptospira</taxon>
    </lineage>
</organism>
<reference key="1">
    <citation type="journal article" date="2004" name="J. Bacteriol.">
        <title>Comparative genomics of two Leptospira interrogans serovars reveals novel insights into physiology and pathogenesis.</title>
        <authorList>
            <person name="Nascimento A.L.T.O."/>
            <person name="Ko A.I."/>
            <person name="Martins E.A.L."/>
            <person name="Monteiro-Vitorello C.B."/>
            <person name="Ho P.L."/>
            <person name="Haake D.A."/>
            <person name="Verjovski-Almeida S."/>
            <person name="Hartskeerl R.A."/>
            <person name="Marques M.V."/>
            <person name="Oliveira M.C."/>
            <person name="Menck C.F.M."/>
            <person name="Leite L.C.C."/>
            <person name="Carrer H."/>
            <person name="Coutinho L.L."/>
            <person name="Degrave W.M."/>
            <person name="Dellagostin O.A."/>
            <person name="El-Dorry H."/>
            <person name="Ferro E.S."/>
            <person name="Ferro M.I.T."/>
            <person name="Furlan L.R."/>
            <person name="Gamberini M."/>
            <person name="Giglioti E.A."/>
            <person name="Goes-Neto A."/>
            <person name="Goldman G.H."/>
            <person name="Goldman M.H.S."/>
            <person name="Harakava R."/>
            <person name="Jeronimo S.M.B."/>
            <person name="Junqueira-de-Azevedo I.L.M."/>
            <person name="Kimura E.T."/>
            <person name="Kuramae E.E."/>
            <person name="Lemos E.G.M."/>
            <person name="Lemos M.V.F."/>
            <person name="Marino C.L."/>
            <person name="Nunes L.R."/>
            <person name="de Oliveira R.C."/>
            <person name="Pereira G.G."/>
            <person name="Reis M.S."/>
            <person name="Schriefer A."/>
            <person name="Siqueira W.J."/>
            <person name="Sommer P."/>
            <person name="Tsai S.M."/>
            <person name="Simpson A.J.G."/>
            <person name="Ferro J.A."/>
            <person name="Camargo L.E.A."/>
            <person name="Kitajima J.P."/>
            <person name="Setubal J.C."/>
            <person name="Van Sluys M.A."/>
        </authorList>
    </citation>
    <scope>NUCLEOTIDE SEQUENCE [LARGE SCALE GENOMIC DNA]</scope>
    <source>
        <strain>Fiocruz L1-130</strain>
    </source>
</reference>
<name>LGT_LEPIC</name>
<keyword id="KW-0997">Cell inner membrane</keyword>
<keyword id="KW-1003">Cell membrane</keyword>
<keyword id="KW-0472">Membrane</keyword>
<keyword id="KW-0808">Transferase</keyword>
<keyword id="KW-0812">Transmembrane</keyword>
<keyword id="KW-1133">Transmembrane helix</keyword>
<sequence>MIDRIPVPFLNPLFKFLFNREWDGPSTFSILMMIGFLTASYLLPKELKRRKLEPEHSDWLLLLGILGTLVGAKIFFVFEIWDQIFVETPGFDGKYIYPLTHWYGFPGRMSLWDNLFSGSGLVFYGGFLFGILFITLYMKYFQLDIASYLDAAVPSMAIGYAIGRLGCWVSGDGCYGFATNVEIPLLVFNYHGAHPSGVPVWNTPLIESIISFLFFFYFQFWARNQNFKKFSIGAQYLVLHGFARLLVEFLRVNKAVFPLMDPPAFVNIPNAEQNPEFLTQYYWHGFSQSQLVSIIIILVGAFFILKWKLWKKENTSNI</sequence>
<gene>
    <name evidence="1" type="primary">lgt</name>
    <name type="ordered locus">LIC_11063</name>
</gene>
<feature type="chain" id="PRO_0000172624" description="Phosphatidylglycerol--prolipoprotein diacylglyceryl transferase">
    <location>
        <begin position="1"/>
        <end position="318"/>
    </location>
</feature>
<feature type="transmembrane region" description="Helical" evidence="1">
    <location>
        <begin position="24"/>
        <end position="44"/>
    </location>
</feature>
<feature type="transmembrane region" description="Helical" evidence="1">
    <location>
        <begin position="60"/>
        <end position="80"/>
    </location>
</feature>
<feature type="transmembrane region" description="Helical" evidence="1">
    <location>
        <begin position="115"/>
        <end position="135"/>
    </location>
</feature>
<feature type="transmembrane region" description="Helical" evidence="1">
    <location>
        <begin position="198"/>
        <end position="218"/>
    </location>
</feature>
<feature type="transmembrane region" description="Helical" evidence="1">
    <location>
        <begin position="285"/>
        <end position="305"/>
    </location>
</feature>
<feature type="binding site" evidence="1">
    <location>
        <position position="164"/>
    </location>
    <ligand>
        <name>a 1,2-diacyl-sn-glycero-3-phospho-(1'-sn-glycerol)</name>
        <dbReference type="ChEBI" id="CHEBI:64716"/>
    </ligand>
</feature>
<comment type="function">
    <text evidence="1">Catalyzes the transfer of the diacylglyceryl group from phosphatidylglycerol to the sulfhydryl group of the N-terminal cysteine of a prolipoprotein, the first step in the formation of mature lipoproteins.</text>
</comment>
<comment type="catalytic activity">
    <reaction evidence="1">
        <text>L-cysteinyl-[prolipoprotein] + a 1,2-diacyl-sn-glycero-3-phospho-(1'-sn-glycerol) = an S-1,2-diacyl-sn-glyceryl-L-cysteinyl-[prolipoprotein] + sn-glycerol 1-phosphate + H(+)</text>
        <dbReference type="Rhea" id="RHEA:56712"/>
        <dbReference type="Rhea" id="RHEA-COMP:14679"/>
        <dbReference type="Rhea" id="RHEA-COMP:14680"/>
        <dbReference type="ChEBI" id="CHEBI:15378"/>
        <dbReference type="ChEBI" id="CHEBI:29950"/>
        <dbReference type="ChEBI" id="CHEBI:57685"/>
        <dbReference type="ChEBI" id="CHEBI:64716"/>
        <dbReference type="ChEBI" id="CHEBI:140658"/>
        <dbReference type="EC" id="2.5.1.145"/>
    </reaction>
</comment>
<comment type="pathway">
    <text evidence="1">Protein modification; lipoprotein biosynthesis (diacylglyceryl transfer).</text>
</comment>
<comment type="subcellular location">
    <subcellularLocation>
        <location evidence="1">Cell inner membrane</location>
        <topology evidence="1">Multi-pass membrane protein</topology>
    </subcellularLocation>
</comment>
<comment type="similarity">
    <text evidence="1">Belongs to the Lgt family.</text>
</comment>
<protein>
    <recommendedName>
        <fullName evidence="1">Phosphatidylglycerol--prolipoprotein diacylglyceryl transferase</fullName>
        <ecNumber evidence="1">2.5.1.145</ecNumber>
    </recommendedName>
</protein>
<evidence type="ECO:0000255" key="1">
    <source>
        <dbReference type="HAMAP-Rule" id="MF_01147"/>
    </source>
</evidence>
<accession>Q72TF8</accession>
<dbReference type="EC" id="2.5.1.145" evidence="1"/>
<dbReference type="EMBL" id="AE016823">
    <property type="protein sequence ID" value="AAS69670.1"/>
    <property type="molecule type" value="Genomic_DNA"/>
</dbReference>
<dbReference type="RefSeq" id="WP_000567061.1">
    <property type="nucleotide sequence ID" value="NC_005823.1"/>
</dbReference>
<dbReference type="SMR" id="Q72TF8"/>
<dbReference type="KEGG" id="lic:LIC_11063"/>
<dbReference type="HOGENOM" id="CLU_013386_1_2_12"/>
<dbReference type="UniPathway" id="UPA00664"/>
<dbReference type="Proteomes" id="UP000007037">
    <property type="component" value="Chromosome I"/>
</dbReference>
<dbReference type="GO" id="GO:0005886">
    <property type="term" value="C:plasma membrane"/>
    <property type="evidence" value="ECO:0007669"/>
    <property type="project" value="UniProtKB-SubCell"/>
</dbReference>
<dbReference type="GO" id="GO:0008961">
    <property type="term" value="F:phosphatidylglycerol-prolipoprotein diacylglyceryl transferase activity"/>
    <property type="evidence" value="ECO:0007669"/>
    <property type="project" value="UniProtKB-UniRule"/>
</dbReference>
<dbReference type="GO" id="GO:0042158">
    <property type="term" value="P:lipoprotein biosynthetic process"/>
    <property type="evidence" value="ECO:0007669"/>
    <property type="project" value="UniProtKB-UniRule"/>
</dbReference>
<dbReference type="HAMAP" id="MF_01147">
    <property type="entry name" value="Lgt"/>
    <property type="match status" value="1"/>
</dbReference>
<dbReference type="InterPro" id="IPR001640">
    <property type="entry name" value="Lgt"/>
</dbReference>
<dbReference type="NCBIfam" id="NF000777">
    <property type="entry name" value="PRK00052.3-2"/>
    <property type="match status" value="1"/>
</dbReference>
<dbReference type="PANTHER" id="PTHR30589:SF0">
    <property type="entry name" value="PHOSPHATIDYLGLYCEROL--PROLIPOPROTEIN DIACYLGLYCERYL TRANSFERASE"/>
    <property type="match status" value="1"/>
</dbReference>
<dbReference type="PANTHER" id="PTHR30589">
    <property type="entry name" value="PROLIPOPROTEIN DIACYLGLYCERYL TRANSFERASE"/>
    <property type="match status" value="1"/>
</dbReference>
<dbReference type="Pfam" id="PF01790">
    <property type="entry name" value="LGT"/>
    <property type="match status" value="1"/>
</dbReference>